<organism>
    <name type="scientific">Tropheryma whipplei (strain Twist)</name>
    <name type="common">Whipple's bacillus</name>
    <dbReference type="NCBI Taxonomy" id="203267"/>
    <lineage>
        <taxon>Bacteria</taxon>
        <taxon>Bacillati</taxon>
        <taxon>Actinomycetota</taxon>
        <taxon>Actinomycetes</taxon>
        <taxon>Micrococcales</taxon>
        <taxon>Tropherymataceae</taxon>
        <taxon>Tropheryma</taxon>
    </lineage>
</organism>
<accession>Q83FT2</accession>
<feature type="chain" id="PRO_0000178259" description="dITP/XTP pyrophosphatase">
    <location>
        <begin position="1"/>
        <end position="193"/>
    </location>
</feature>
<feature type="active site" description="Proton acceptor" evidence="1">
    <location>
        <position position="65"/>
    </location>
</feature>
<feature type="binding site" evidence="1">
    <location>
        <begin position="7"/>
        <end position="12"/>
    </location>
    <ligand>
        <name>substrate</name>
    </ligand>
</feature>
<feature type="binding site" evidence="1">
    <location>
        <position position="65"/>
    </location>
    <ligand>
        <name>Mg(2+)</name>
        <dbReference type="ChEBI" id="CHEBI:18420"/>
    </ligand>
</feature>
<feature type="binding site" evidence="1">
    <location>
        <position position="66"/>
    </location>
    <ligand>
        <name>substrate</name>
    </ligand>
</feature>
<feature type="binding site" evidence="1">
    <location>
        <begin position="144"/>
        <end position="147"/>
    </location>
    <ligand>
        <name>substrate</name>
    </ligand>
</feature>
<feature type="binding site" evidence="1">
    <location>
        <position position="167"/>
    </location>
    <ligand>
        <name>substrate</name>
    </ligand>
</feature>
<feature type="binding site" evidence="1">
    <location>
        <begin position="172"/>
        <end position="173"/>
    </location>
    <ligand>
        <name>substrate</name>
    </ligand>
</feature>
<gene>
    <name type="ordered locus">TWT_621</name>
</gene>
<dbReference type="EC" id="3.6.1.66" evidence="1"/>
<dbReference type="EMBL" id="AE014184">
    <property type="protein sequence ID" value="AAO44718.1"/>
    <property type="molecule type" value="Genomic_DNA"/>
</dbReference>
<dbReference type="RefSeq" id="WP_011102689.1">
    <property type="nucleotide sequence ID" value="NC_004572.3"/>
</dbReference>
<dbReference type="SMR" id="Q83FT2"/>
<dbReference type="STRING" id="203267.TWT_621"/>
<dbReference type="KEGG" id="twh:TWT_621"/>
<dbReference type="eggNOG" id="COG0127">
    <property type="taxonomic scope" value="Bacteria"/>
</dbReference>
<dbReference type="HOGENOM" id="CLU_082080_0_1_11"/>
<dbReference type="OrthoDB" id="9807456at2"/>
<dbReference type="Proteomes" id="UP000002200">
    <property type="component" value="Chromosome"/>
</dbReference>
<dbReference type="GO" id="GO:0005829">
    <property type="term" value="C:cytosol"/>
    <property type="evidence" value="ECO:0007669"/>
    <property type="project" value="TreeGrafter"/>
</dbReference>
<dbReference type="GO" id="GO:0035870">
    <property type="term" value="F:dITP diphosphatase activity"/>
    <property type="evidence" value="ECO:0007669"/>
    <property type="project" value="RHEA"/>
</dbReference>
<dbReference type="GO" id="GO:0036220">
    <property type="term" value="F:ITP diphosphatase activity"/>
    <property type="evidence" value="ECO:0007669"/>
    <property type="project" value="UniProtKB-EC"/>
</dbReference>
<dbReference type="GO" id="GO:0046872">
    <property type="term" value="F:metal ion binding"/>
    <property type="evidence" value="ECO:0007669"/>
    <property type="project" value="UniProtKB-KW"/>
</dbReference>
<dbReference type="GO" id="GO:0000166">
    <property type="term" value="F:nucleotide binding"/>
    <property type="evidence" value="ECO:0007669"/>
    <property type="project" value="UniProtKB-KW"/>
</dbReference>
<dbReference type="GO" id="GO:0017111">
    <property type="term" value="F:ribonucleoside triphosphate phosphatase activity"/>
    <property type="evidence" value="ECO:0007669"/>
    <property type="project" value="InterPro"/>
</dbReference>
<dbReference type="GO" id="GO:0036222">
    <property type="term" value="F:XTP diphosphatase activity"/>
    <property type="evidence" value="ECO:0007669"/>
    <property type="project" value="RHEA"/>
</dbReference>
<dbReference type="GO" id="GO:0009117">
    <property type="term" value="P:nucleotide metabolic process"/>
    <property type="evidence" value="ECO:0007669"/>
    <property type="project" value="UniProtKB-KW"/>
</dbReference>
<dbReference type="GO" id="GO:0009146">
    <property type="term" value="P:purine nucleoside triphosphate catabolic process"/>
    <property type="evidence" value="ECO:0007669"/>
    <property type="project" value="UniProtKB-UniRule"/>
</dbReference>
<dbReference type="CDD" id="cd00515">
    <property type="entry name" value="HAM1"/>
    <property type="match status" value="1"/>
</dbReference>
<dbReference type="FunFam" id="3.90.950.10:FF:000001">
    <property type="entry name" value="dITP/XTP pyrophosphatase"/>
    <property type="match status" value="1"/>
</dbReference>
<dbReference type="Gene3D" id="3.90.950.10">
    <property type="match status" value="1"/>
</dbReference>
<dbReference type="HAMAP" id="MF_01405">
    <property type="entry name" value="Non_canon_purine_NTPase"/>
    <property type="match status" value="1"/>
</dbReference>
<dbReference type="InterPro" id="IPR020922">
    <property type="entry name" value="dITP/XTP_pyrophosphatase"/>
</dbReference>
<dbReference type="InterPro" id="IPR029001">
    <property type="entry name" value="ITPase-like_fam"/>
</dbReference>
<dbReference type="InterPro" id="IPR002637">
    <property type="entry name" value="RdgB/HAM1"/>
</dbReference>
<dbReference type="NCBIfam" id="TIGR00042">
    <property type="entry name" value="RdgB/HAM1 family non-canonical purine NTP pyrophosphatase"/>
    <property type="match status" value="1"/>
</dbReference>
<dbReference type="PANTHER" id="PTHR11067:SF9">
    <property type="entry name" value="INOSINE TRIPHOSPHATE PYROPHOSPHATASE"/>
    <property type="match status" value="1"/>
</dbReference>
<dbReference type="PANTHER" id="PTHR11067">
    <property type="entry name" value="INOSINE TRIPHOSPHATE PYROPHOSPHATASE/HAM1 PROTEIN"/>
    <property type="match status" value="1"/>
</dbReference>
<dbReference type="Pfam" id="PF01725">
    <property type="entry name" value="Ham1p_like"/>
    <property type="match status" value="1"/>
</dbReference>
<dbReference type="SUPFAM" id="SSF52972">
    <property type="entry name" value="ITPase-like"/>
    <property type="match status" value="1"/>
</dbReference>
<sequence length="193" mass="21103">MEIVFVSENENKIAEAREILLPLGFQSIFCGVTCRETGLTFTENAVLKAQAAVGSVKDVPIMADDSGICVDALNGMPGVLSSRWSQDGRNIDLLLWQMRDVPDVHRTAHFVCSIACVMPNTEVRTVSSVWHGRILHAPDGTGGFGYDPVFLPDGYSVSAAGLGSDLKNRISHRYKALRLMSSLLKRTYFSCHA</sequence>
<protein>
    <recommendedName>
        <fullName evidence="1">dITP/XTP pyrophosphatase</fullName>
        <ecNumber evidence="1">3.6.1.66</ecNumber>
    </recommendedName>
    <alternativeName>
        <fullName evidence="1">Non-canonical purine NTP pyrophosphatase</fullName>
    </alternativeName>
    <alternativeName>
        <fullName evidence="1">Non-standard purine NTP pyrophosphatase</fullName>
    </alternativeName>
    <alternativeName>
        <fullName evidence="1">Nucleoside-triphosphate diphosphatase</fullName>
    </alternativeName>
    <alternativeName>
        <fullName evidence="1">Nucleoside-triphosphate pyrophosphatase</fullName>
        <shortName evidence="1">NTPase</shortName>
    </alternativeName>
</protein>
<reference key="1">
    <citation type="journal article" date="2003" name="Genome Res.">
        <title>Tropheryma whipplei twist: a human pathogenic Actinobacteria with a reduced genome.</title>
        <authorList>
            <person name="Raoult D."/>
            <person name="Ogata H."/>
            <person name="Audic S."/>
            <person name="Robert C."/>
            <person name="Suhre K."/>
            <person name="Drancourt M."/>
            <person name="Claverie J.-M."/>
        </authorList>
    </citation>
    <scope>NUCLEOTIDE SEQUENCE [LARGE SCALE GENOMIC DNA]</scope>
    <source>
        <strain>Twist</strain>
    </source>
</reference>
<proteinExistence type="inferred from homology"/>
<keyword id="KW-0378">Hydrolase</keyword>
<keyword id="KW-0460">Magnesium</keyword>
<keyword id="KW-0479">Metal-binding</keyword>
<keyword id="KW-0546">Nucleotide metabolism</keyword>
<keyword id="KW-0547">Nucleotide-binding</keyword>
<keyword id="KW-1185">Reference proteome</keyword>
<evidence type="ECO:0000255" key="1">
    <source>
        <dbReference type="HAMAP-Rule" id="MF_01405"/>
    </source>
</evidence>
<comment type="function">
    <text evidence="1">Pyrophosphatase that catalyzes the hydrolysis of nucleoside triphosphates to their monophosphate derivatives, with a high preference for the non-canonical purine nucleotides XTP (xanthosine triphosphate), dITP (deoxyinosine triphosphate) and ITP. Seems to function as a house-cleaning enzyme that removes non-canonical purine nucleotides from the nucleotide pool, thus preventing their incorporation into DNA/RNA and avoiding chromosomal lesions.</text>
</comment>
<comment type="catalytic activity">
    <reaction evidence="1">
        <text>XTP + H2O = XMP + diphosphate + H(+)</text>
        <dbReference type="Rhea" id="RHEA:28610"/>
        <dbReference type="ChEBI" id="CHEBI:15377"/>
        <dbReference type="ChEBI" id="CHEBI:15378"/>
        <dbReference type="ChEBI" id="CHEBI:33019"/>
        <dbReference type="ChEBI" id="CHEBI:57464"/>
        <dbReference type="ChEBI" id="CHEBI:61314"/>
        <dbReference type="EC" id="3.6.1.66"/>
    </reaction>
</comment>
<comment type="catalytic activity">
    <reaction evidence="1">
        <text>dITP + H2O = dIMP + diphosphate + H(+)</text>
        <dbReference type="Rhea" id="RHEA:28342"/>
        <dbReference type="ChEBI" id="CHEBI:15377"/>
        <dbReference type="ChEBI" id="CHEBI:15378"/>
        <dbReference type="ChEBI" id="CHEBI:33019"/>
        <dbReference type="ChEBI" id="CHEBI:61194"/>
        <dbReference type="ChEBI" id="CHEBI:61382"/>
        <dbReference type="EC" id="3.6.1.66"/>
    </reaction>
</comment>
<comment type="catalytic activity">
    <reaction evidence="1">
        <text>ITP + H2O = IMP + diphosphate + H(+)</text>
        <dbReference type="Rhea" id="RHEA:29399"/>
        <dbReference type="ChEBI" id="CHEBI:15377"/>
        <dbReference type="ChEBI" id="CHEBI:15378"/>
        <dbReference type="ChEBI" id="CHEBI:33019"/>
        <dbReference type="ChEBI" id="CHEBI:58053"/>
        <dbReference type="ChEBI" id="CHEBI:61402"/>
        <dbReference type="EC" id="3.6.1.66"/>
    </reaction>
</comment>
<comment type="cofactor">
    <cofactor evidence="1">
        <name>Mg(2+)</name>
        <dbReference type="ChEBI" id="CHEBI:18420"/>
    </cofactor>
    <text evidence="1">Binds 1 Mg(2+) ion per subunit.</text>
</comment>
<comment type="subunit">
    <text evidence="1">Homodimer.</text>
</comment>
<comment type="similarity">
    <text evidence="1">Belongs to the HAM1 NTPase family.</text>
</comment>
<name>IXTPA_TROWT</name>